<dbReference type="EMBL" id="AB284367">
    <property type="protein sequence ID" value="BAF37220.1"/>
    <property type="molecule type" value="mRNA"/>
</dbReference>
<dbReference type="EMBL" id="AL049638">
    <property type="protein sequence ID" value="CAB40949.1"/>
    <property type="status" value="ALT_SEQ"/>
    <property type="molecule type" value="Genomic_DNA"/>
</dbReference>
<dbReference type="EMBL" id="AL161533">
    <property type="protein sequence ID" value="CAB78251.1"/>
    <property type="status" value="ALT_SEQ"/>
    <property type="molecule type" value="Genomic_DNA"/>
</dbReference>
<dbReference type="EMBL" id="CP002687">
    <property type="protein sequence ID" value="AEE83094.1"/>
    <property type="molecule type" value="Genomic_DNA"/>
</dbReference>
<dbReference type="EMBL" id="AY070738">
    <property type="protein sequence ID" value="AAL50079.1"/>
    <property type="molecule type" value="mRNA"/>
</dbReference>
<dbReference type="EMBL" id="AY149932">
    <property type="protein sequence ID" value="AAN31086.1"/>
    <property type="molecule type" value="mRNA"/>
</dbReference>
<dbReference type="PIR" id="T06615">
    <property type="entry name" value="T06615"/>
</dbReference>
<dbReference type="RefSeq" id="NP_192945.2">
    <property type="nucleotide sequence ID" value="NM_117278.4"/>
</dbReference>
<dbReference type="SMR" id="Q8VYJ2"/>
<dbReference type="FunCoup" id="Q8VYJ2">
    <property type="interactions" value="291"/>
</dbReference>
<dbReference type="IntAct" id="Q8VYJ2">
    <property type="interactions" value="4"/>
</dbReference>
<dbReference type="STRING" id="3702.Q8VYJ2"/>
<dbReference type="GlyGen" id="Q8VYJ2">
    <property type="glycosylation" value="2 sites, 1 O-linked glycan (2 sites)"/>
</dbReference>
<dbReference type="iPTMnet" id="Q8VYJ2"/>
<dbReference type="PaxDb" id="3702-AT4G12080.1"/>
<dbReference type="ProteomicsDB" id="244668"/>
<dbReference type="EnsemblPlants" id="AT4G12080.1">
    <property type="protein sequence ID" value="AT4G12080.1"/>
    <property type="gene ID" value="AT4G12080"/>
</dbReference>
<dbReference type="GeneID" id="826816"/>
<dbReference type="Gramene" id="AT4G12080.1">
    <property type="protein sequence ID" value="AT4G12080.1"/>
    <property type="gene ID" value="AT4G12080"/>
</dbReference>
<dbReference type="KEGG" id="ath:AT4G12080"/>
<dbReference type="Araport" id="AT4G12080"/>
<dbReference type="TAIR" id="AT4G12080">
    <property type="gene designation" value="AHL1"/>
</dbReference>
<dbReference type="eggNOG" id="ENOG502QT7J">
    <property type="taxonomic scope" value="Eukaryota"/>
</dbReference>
<dbReference type="HOGENOM" id="CLU_039808_0_0_1"/>
<dbReference type="InParanoid" id="Q8VYJ2"/>
<dbReference type="OMA" id="PETEDPY"/>
<dbReference type="PhylomeDB" id="Q8VYJ2"/>
<dbReference type="PRO" id="PR:Q8VYJ2"/>
<dbReference type="Proteomes" id="UP000006548">
    <property type="component" value="Chromosome 4"/>
</dbReference>
<dbReference type="ExpressionAtlas" id="Q8VYJ2">
    <property type="expression patterns" value="baseline and differential"/>
</dbReference>
<dbReference type="GO" id="GO:0098687">
    <property type="term" value="C:chromosomal region"/>
    <property type="evidence" value="ECO:0000314"/>
    <property type="project" value="UniProtKB"/>
</dbReference>
<dbReference type="GO" id="GO:0005737">
    <property type="term" value="C:cytoplasm"/>
    <property type="evidence" value="ECO:0007005"/>
    <property type="project" value="TAIR"/>
</dbReference>
<dbReference type="GO" id="GO:0005739">
    <property type="term" value="C:mitochondrion"/>
    <property type="evidence" value="ECO:0007005"/>
    <property type="project" value="TAIR"/>
</dbReference>
<dbReference type="GO" id="GO:0005730">
    <property type="term" value="C:nucleolus"/>
    <property type="evidence" value="ECO:0007005"/>
    <property type="project" value="TAIR"/>
</dbReference>
<dbReference type="GO" id="GO:0005654">
    <property type="term" value="C:nucleoplasm"/>
    <property type="evidence" value="ECO:0000314"/>
    <property type="project" value="UniProtKB"/>
</dbReference>
<dbReference type="GO" id="GO:0005634">
    <property type="term" value="C:nucleus"/>
    <property type="evidence" value="ECO:0007005"/>
    <property type="project" value="TAIR"/>
</dbReference>
<dbReference type="GO" id="GO:0003677">
    <property type="term" value="F:DNA binding"/>
    <property type="evidence" value="ECO:0000314"/>
    <property type="project" value="UniProtKB"/>
</dbReference>
<dbReference type="GO" id="GO:0003680">
    <property type="term" value="F:minor groove of adenine-thymine-rich DNA binding"/>
    <property type="evidence" value="ECO:0000314"/>
    <property type="project" value="UniProtKB"/>
</dbReference>
<dbReference type="GO" id="GO:0043565">
    <property type="term" value="F:sequence-specific DNA binding"/>
    <property type="evidence" value="ECO:0000314"/>
    <property type="project" value="UniProtKB"/>
</dbReference>
<dbReference type="CDD" id="cd11378">
    <property type="entry name" value="DUF296"/>
    <property type="match status" value="1"/>
</dbReference>
<dbReference type="FunFam" id="3.30.1330.80:FF:000003">
    <property type="entry name" value="AT-hook motif nuclear-localized protein 1-like"/>
    <property type="match status" value="1"/>
</dbReference>
<dbReference type="Gene3D" id="3.30.1330.80">
    <property type="entry name" value="Hypothetical protein, similar to alpha- acetolactate decarboxylase, domain 2"/>
    <property type="match status" value="1"/>
</dbReference>
<dbReference type="InterPro" id="IPR039605">
    <property type="entry name" value="AHL"/>
</dbReference>
<dbReference type="InterPro" id="IPR005175">
    <property type="entry name" value="PPC_dom"/>
</dbReference>
<dbReference type="PANTHER" id="PTHR31500:SF7">
    <property type="entry name" value="AT-HOOK MOTIF NUCLEAR-LOCALIZED PROTEIN 1"/>
    <property type="match status" value="1"/>
</dbReference>
<dbReference type="PANTHER" id="PTHR31500">
    <property type="entry name" value="AT-HOOK MOTIF NUCLEAR-LOCALIZED PROTEIN 9"/>
    <property type="match status" value="1"/>
</dbReference>
<dbReference type="Pfam" id="PF03479">
    <property type="entry name" value="PCC"/>
    <property type="match status" value="1"/>
</dbReference>
<dbReference type="SUPFAM" id="SSF117856">
    <property type="entry name" value="AF0104/ALDC/Ptd012-like"/>
    <property type="match status" value="1"/>
</dbReference>
<dbReference type="PROSITE" id="PS51742">
    <property type="entry name" value="PPC"/>
    <property type="match status" value="1"/>
</dbReference>
<accession>Q8VYJ2</accession>
<accession>Q9SZ73</accession>
<comment type="function">
    <text evidence="4">Transcription factor that specifically binds AT-rich DNA sequences related to the nuclear matrix attachment regions (MARs). May play a function in the positioning of chromatin fibers within the nucleus.</text>
</comment>
<comment type="subcellular location">
    <subcellularLocation>
        <location evidence="4">Nucleus</location>
        <location evidence="4">Nucleoplasm</location>
    </subcellularLocation>
    <subcellularLocation>
        <location evidence="4">Chromosome</location>
    </subcellularLocation>
    <text evidence="4">Localized specifically on the chromosomal surface region throughout mitotis.</text>
</comment>
<comment type="domain">
    <text evidence="5">The PPC domain mediates interactions between AHL proteins.</text>
</comment>
<comment type="sequence caution" evidence="7">
    <conflict type="erroneous gene model prediction">
        <sequence resource="EMBL-CDS" id="CAB40949"/>
    </conflict>
</comment>
<comment type="sequence caution" evidence="7">
    <conflict type="erroneous gene model prediction">
        <sequence resource="EMBL-CDS" id="CAB78251"/>
    </conflict>
</comment>
<feature type="chain" id="PRO_0000432019" description="AT-hook motif nuclear-localized protein 1">
    <location>
        <begin position="1"/>
        <end position="356"/>
    </location>
</feature>
<feature type="domain" description="PPC" evidence="2">
    <location>
        <begin position="167"/>
        <end position="309"/>
    </location>
</feature>
<feature type="DNA-binding region" description="A.T hook" evidence="1">
    <location>
        <begin position="89"/>
        <end position="101"/>
    </location>
</feature>
<feature type="region of interest" description="Disordered" evidence="3">
    <location>
        <begin position="1"/>
        <end position="127"/>
    </location>
</feature>
<feature type="region of interest" description="Required for nuclear localization" evidence="4">
    <location>
        <begin position="270"/>
        <end position="287"/>
    </location>
</feature>
<feature type="short sequence motif" description="Bipartite nuclear localization signal" evidence="6">
    <location>
        <begin position="89"/>
        <end position="97"/>
    </location>
</feature>
<feature type="short sequence motif" description="Nuclear localization signal" evidence="6">
    <location>
        <begin position="295"/>
        <end position="302"/>
    </location>
</feature>
<feature type="compositionally biased region" description="Pro residues" evidence="3">
    <location>
        <begin position="49"/>
        <end position="66"/>
    </location>
</feature>
<feature type="compositionally biased region" description="Basic residues" evidence="3">
    <location>
        <begin position="88"/>
        <end position="97"/>
    </location>
</feature>
<feature type="compositionally biased region" description="Low complexity" evidence="3">
    <location>
        <begin position="106"/>
        <end position="118"/>
    </location>
</feature>
<feature type="mutagenesis site" description="Reduces DNA-binding activity." evidence="4">
    <original>GRP</original>
    <variation>AAA</variation>
    <location>
        <begin position="93"/>
        <end position="95"/>
    </location>
</feature>
<proteinExistence type="evidence at protein level"/>
<reference key="1">
    <citation type="journal article" date="2004" name="Plant Mol. Biol.">
        <title>Identification of a novel plant MAR DNA binding protein localized on chromosomal surfaces.</title>
        <authorList>
            <person name="Fujimoto S."/>
            <person name="Matsunaga S."/>
            <person name="Yonemura M."/>
            <person name="Uchiyama S."/>
            <person name="Azuma T."/>
            <person name="Fukui K."/>
        </authorList>
    </citation>
    <scope>NUCLEOTIDE SEQUENCE [MRNA]</scope>
    <scope>GENE FAMILY</scope>
    <scope>NOMENCLATURE</scope>
    <scope>SUBCELLULAR LOCATION</scope>
    <scope>MUTAGENESIS OF 93-GLY--PRO-95</scope>
    <scope>FUNCTION</scope>
    <source>
        <strain>cv. Columbia</strain>
    </source>
</reference>
<reference key="2">
    <citation type="journal article" date="1999" name="Nature">
        <title>Sequence and analysis of chromosome 4 of the plant Arabidopsis thaliana.</title>
        <authorList>
            <person name="Mayer K.F.X."/>
            <person name="Schueller C."/>
            <person name="Wambutt R."/>
            <person name="Murphy G."/>
            <person name="Volckaert G."/>
            <person name="Pohl T."/>
            <person name="Duesterhoeft A."/>
            <person name="Stiekema W."/>
            <person name="Entian K.-D."/>
            <person name="Terryn N."/>
            <person name="Harris B."/>
            <person name="Ansorge W."/>
            <person name="Brandt P."/>
            <person name="Grivell L.A."/>
            <person name="Rieger M."/>
            <person name="Weichselgartner M."/>
            <person name="de Simone V."/>
            <person name="Obermaier B."/>
            <person name="Mache R."/>
            <person name="Mueller M."/>
            <person name="Kreis M."/>
            <person name="Delseny M."/>
            <person name="Puigdomenech P."/>
            <person name="Watson M."/>
            <person name="Schmidtheini T."/>
            <person name="Reichert B."/>
            <person name="Portetelle D."/>
            <person name="Perez-Alonso M."/>
            <person name="Boutry M."/>
            <person name="Bancroft I."/>
            <person name="Vos P."/>
            <person name="Hoheisel J."/>
            <person name="Zimmermann W."/>
            <person name="Wedler H."/>
            <person name="Ridley P."/>
            <person name="Langham S.-A."/>
            <person name="McCullagh B."/>
            <person name="Bilham L."/>
            <person name="Robben J."/>
            <person name="van der Schueren J."/>
            <person name="Grymonprez B."/>
            <person name="Chuang Y.-J."/>
            <person name="Vandenbussche F."/>
            <person name="Braeken M."/>
            <person name="Weltjens I."/>
            <person name="Voet M."/>
            <person name="Bastiaens I."/>
            <person name="Aert R."/>
            <person name="Defoor E."/>
            <person name="Weitzenegger T."/>
            <person name="Bothe G."/>
            <person name="Ramsperger U."/>
            <person name="Hilbert H."/>
            <person name="Braun M."/>
            <person name="Holzer E."/>
            <person name="Brandt A."/>
            <person name="Peters S."/>
            <person name="van Staveren M."/>
            <person name="Dirkse W."/>
            <person name="Mooijman P."/>
            <person name="Klein Lankhorst R."/>
            <person name="Rose M."/>
            <person name="Hauf J."/>
            <person name="Koetter P."/>
            <person name="Berneiser S."/>
            <person name="Hempel S."/>
            <person name="Feldpausch M."/>
            <person name="Lamberth S."/>
            <person name="Van den Daele H."/>
            <person name="De Keyser A."/>
            <person name="Buysshaert C."/>
            <person name="Gielen J."/>
            <person name="Villarroel R."/>
            <person name="De Clercq R."/>
            <person name="van Montagu M."/>
            <person name="Rogers J."/>
            <person name="Cronin A."/>
            <person name="Quail M.A."/>
            <person name="Bray-Allen S."/>
            <person name="Clark L."/>
            <person name="Doggett J."/>
            <person name="Hall S."/>
            <person name="Kay M."/>
            <person name="Lennard N."/>
            <person name="McLay K."/>
            <person name="Mayes R."/>
            <person name="Pettett A."/>
            <person name="Rajandream M.A."/>
            <person name="Lyne M."/>
            <person name="Benes V."/>
            <person name="Rechmann S."/>
            <person name="Borkova D."/>
            <person name="Bloecker H."/>
            <person name="Scharfe M."/>
            <person name="Grimm M."/>
            <person name="Loehnert T.-H."/>
            <person name="Dose S."/>
            <person name="de Haan M."/>
            <person name="Maarse A.C."/>
            <person name="Schaefer M."/>
            <person name="Mueller-Auer S."/>
            <person name="Gabel C."/>
            <person name="Fuchs M."/>
            <person name="Fartmann B."/>
            <person name="Granderath K."/>
            <person name="Dauner D."/>
            <person name="Herzl A."/>
            <person name="Neumann S."/>
            <person name="Argiriou A."/>
            <person name="Vitale D."/>
            <person name="Liguori R."/>
            <person name="Piravandi E."/>
            <person name="Massenet O."/>
            <person name="Quigley F."/>
            <person name="Clabauld G."/>
            <person name="Muendlein A."/>
            <person name="Felber R."/>
            <person name="Schnabl S."/>
            <person name="Hiller R."/>
            <person name="Schmidt W."/>
            <person name="Lecharny A."/>
            <person name="Aubourg S."/>
            <person name="Chefdor F."/>
            <person name="Cooke R."/>
            <person name="Berger C."/>
            <person name="Monfort A."/>
            <person name="Casacuberta E."/>
            <person name="Gibbons T."/>
            <person name="Weber N."/>
            <person name="Vandenbol M."/>
            <person name="Bargues M."/>
            <person name="Terol J."/>
            <person name="Torres A."/>
            <person name="Perez-Perez A."/>
            <person name="Purnelle B."/>
            <person name="Bent E."/>
            <person name="Johnson S."/>
            <person name="Tacon D."/>
            <person name="Jesse T."/>
            <person name="Heijnen L."/>
            <person name="Schwarz S."/>
            <person name="Scholler P."/>
            <person name="Heber S."/>
            <person name="Francs P."/>
            <person name="Bielke C."/>
            <person name="Frishman D."/>
            <person name="Haase D."/>
            <person name="Lemcke K."/>
            <person name="Mewes H.-W."/>
            <person name="Stocker S."/>
            <person name="Zaccaria P."/>
            <person name="Bevan M."/>
            <person name="Wilson R.K."/>
            <person name="de la Bastide M."/>
            <person name="Habermann K."/>
            <person name="Parnell L."/>
            <person name="Dedhia N."/>
            <person name="Gnoj L."/>
            <person name="Schutz K."/>
            <person name="Huang E."/>
            <person name="Spiegel L."/>
            <person name="Sekhon M."/>
            <person name="Murray J."/>
            <person name="Sheet P."/>
            <person name="Cordes M."/>
            <person name="Abu-Threideh J."/>
            <person name="Stoneking T."/>
            <person name="Kalicki J."/>
            <person name="Graves T."/>
            <person name="Harmon G."/>
            <person name="Edwards J."/>
            <person name="Latreille P."/>
            <person name="Courtney L."/>
            <person name="Cloud J."/>
            <person name="Abbott A."/>
            <person name="Scott K."/>
            <person name="Johnson D."/>
            <person name="Minx P."/>
            <person name="Bentley D."/>
            <person name="Fulton B."/>
            <person name="Miller N."/>
            <person name="Greco T."/>
            <person name="Kemp K."/>
            <person name="Kramer J."/>
            <person name="Fulton L."/>
            <person name="Mardis E."/>
            <person name="Dante M."/>
            <person name="Pepin K."/>
            <person name="Hillier L.W."/>
            <person name="Nelson J."/>
            <person name="Spieth J."/>
            <person name="Ryan E."/>
            <person name="Andrews S."/>
            <person name="Geisel C."/>
            <person name="Layman D."/>
            <person name="Du H."/>
            <person name="Ali J."/>
            <person name="Berghoff A."/>
            <person name="Jones K."/>
            <person name="Drone K."/>
            <person name="Cotton M."/>
            <person name="Joshu C."/>
            <person name="Antonoiu B."/>
            <person name="Zidanic M."/>
            <person name="Strong C."/>
            <person name="Sun H."/>
            <person name="Lamar B."/>
            <person name="Yordan C."/>
            <person name="Ma P."/>
            <person name="Zhong J."/>
            <person name="Preston R."/>
            <person name="Vil D."/>
            <person name="Shekher M."/>
            <person name="Matero A."/>
            <person name="Shah R."/>
            <person name="Swaby I.K."/>
            <person name="O'Shaughnessy A."/>
            <person name="Rodriguez M."/>
            <person name="Hoffman J."/>
            <person name="Till S."/>
            <person name="Granat S."/>
            <person name="Shohdy N."/>
            <person name="Hasegawa A."/>
            <person name="Hameed A."/>
            <person name="Lodhi M."/>
            <person name="Johnson A."/>
            <person name="Chen E."/>
            <person name="Marra M.A."/>
            <person name="Martienssen R."/>
            <person name="McCombie W.R."/>
        </authorList>
    </citation>
    <scope>NUCLEOTIDE SEQUENCE [LARGE SCALE GENOMIC DNA]</scope>
    <source>
        <strain>cv. Columbia</strain>
    </source>
</reference>
<reference key="3">
    <citation type="journal article" date="2017" name="Plant J.">
        <title>Araport11: a complete reannotation of the Arabidopsis thaliana reference genome.</title>
        <authorList>
            <person name="Cheng C.Y."/>
            <person name="Krishnakumar V."/>
            <person name="Chan A.P."/>
            <person name="Thibaud-Nissen F."/>
            <person name="Schobel S."/>
            <person name="Town C.D."/>
        </authorList>
    </citation>
    <scope>GENOME REANNOTATION</scope>
    <source>
        <strain>cv. Columbia</strain>
    </source>
</reference>
<reference key="4">
    <citation type="journal article" date="2003" name="Science">
        <title>Empirical analysis of transcriptional activity in the Arabidopsis genome.</title>
        <authorList>
            <person name="Yamada K."/>
            <person name="Lim J."/>
            <person name="Dale J.M."/>
            <person name="Chen H."/>
            <person name="Shinn P."/>
            <person name="Palm C.J."/>
            <person name="Southwick A.M."/>
            <person name="Wu H.C."/>
            <person name="Kim C.J."/>
            <person name="Nguyen M."/>
            <person name="Pham P.K."/>
            <person name="Cheuk R.F."/>
            <person name="Karlin-Newmann G."/>
            <person name="Liu S.X."/>
            <person name="Lam B."/>
            <person name="Sakano H."/>
            <person name="Wu T."/>
            <person name="Yu G."/>
            <person name="Miranda M."/>
            <person name="Quach H.L."/>
            <person name="Tripp M."/>
            <person name="Chang C.H."/>
            <person name="Lee J.M."/>
            <person name="Toriumi M.J."/>
            <person name="Chan M.M."/>
            <person name="Tang C.C."/>
            <person name="Onodera C.S."/>
            <person name="Deng J.M."/>
            <person name="Akiyama K."/>
            <person name="Ansari Y."/>
            <person name="Arakawa T."/>
            <person name="Banh J."/>
            <person name="Banno F."/>
            <person name="Bowser L."/>
            <person name="Brooks S.Y."/>
            <person name="Carninci P."/>
            <person name="Chao Q."/>
            <person name="Choy N."/>
            <person name="Enju A."/>
            <person name="Goldsmith A.D."/>
            <person name="Gurjal M."/>
            <person name="Hansen N.F."/>
            <person name="Hayashizaki Y."/>
            <person name="Johnson-Hopson C."/>
            <person name="Hsuan V.W."/>
            <person name="Iida K."/>
            <person name="Karnes M."/>
            <person name="Khan S."/>
            <person name="Koesema E."/>
            <person name="Ishida J."/>
            <person name="Jiang P.X."/>
            <person name="Jones T."/>
            <person name="Kawai J."/>
            <person name="Kamiya A."/>
            <person name="Meyers C."/>
            <person name="Nakajima M."/>
            <person name="Narusaka M."/>
            <person name="Seki M."/>
            <person name="Sakurai T."/>
            <person name="Satou M."/>
            <person name="Tamse R."/>
            <person name="Vaysberg M."/>
            <person name="Wallender E.K."/>
            <person name="Wong C."/>
            <person name="Yamamura Y."/>
            <person name="Yuan S."/>
            <person name="Shinozaki K."/>
            <person name="Davis R.W."/>
            <person name="Theologis A."/>
            <person name="Ecker J.R."/>
        </authorList>
    </citation>
    <scope>NUCLEOTIDE SEQUENCE [LARGE SCALE MRNA]</scope>
    <source>
        <strain>cv. Columbia</strain>
    </source>
</reference>
<reference key="5">
    <citation type="journal article" date="2013" name="Proc. Natl. Acad. Sci. U.S.A.">
        <title>Arabidopsis thaliana AHL family modulates hypocotyl growth redundantly by interacting with each other via the PPC/DUF296 domain.</title>
        <authorList>
            <person name="Zhao J."/>
            <person name="Favero D.S."/>
            <person name="Peng H."/>
            <person name="Neff M.M."/>
        </authorList>
    </citation>
    <scope>GENE FAMILY</scope>
    <scope>DOMAIN PPC</scope>
</reference>
<keyword id="KW-0158">Chromosome</keyword>
<keyword id="KW-0238">DNA-binding</keyword>
<keyword id="KW-0539">Nucleus</keyword>
<keyword id="KW-1185">Reference proteome</keyword>
<keyword id="KW-0804">Transcription</keyword>
<keyword id="KW-0805">Transcription regulation</keyword>
<evidence type="ECO:0000255" key="1"/>
<evidence type="ECO:0000255" key="2">
    <source>
        <dbReference type="PROSITE-ProRule" id="PRU01078"/>
    </source>
</evidence>
<evidence type="ECO:0000256" key="3">
    <source>
        <dbReference type="SAM" id="MobiDB-lite"/>
    </source>
</evidence>
<evidence type="ECO:0000269" key="4">
    <source>
    </source>
</evidence>
<evidence type="ECO:0000269" key="5">
    <source>
    </source>
</evidence>
<evidence type="ECO:0000303" key="6">
    <source>
    </source>
</evidence>
<evidence type="ECO:0000305" key="7"/>
<evidence type="ECO:0000312" key="8">
    <source>
        <dbReference type="Araport" id="AT4G12080"/>
    </source>
</evidence>
<evidence type="ECO:0000312" key="9">
    <source>
        <dbReference type="EMBL" id="CAB40949.1"/>
    </source>
</evidence>
<organism>
    <name type="scientific">Arabidopsis thaliana</name>
    <name type="common">Mouse-ear cress</name>
    <dbReference type="NCBI Taxonomy" id="3702"/>
    <lineage>
        <taxon>Eukaryota</taxon>
        <taxon>Viridiplantae</taxon>
        <taxon>Streptophyta</taxon>
        <taxon>Embryophyta</taxon>
        <taxon>Tracheophyta</taxon>
        <taxon>Spermatophyta</taxon>
        <taxon>Magnoliopsida</taxon>
        <taxon>eudicotyledons</taxon>
        <taxon>Gunneridae</taxon>
        <taxon>Pentapetalae</taxon>
        <taxon>rosids</taxon>
        <taxon>malvids</taxon>
        <taxon>Brassicales</taxon>
        <taxon>Brassicaceae</taxon>
        <taxon>Camelineae</taxon>
        <taxon>Arabidopsis</taxon>
    </lineage>
</organism>
<name>AHL1_ARATH</name>
<protein>
    <recommendedName>
        <fullName evidence="6">AT-hook motif nuclear-localized protein 1</fullName>
    </recommendedName>
</protein>
<gene>
    <name evidence="6" type="primary">AHL1</name>
    <name evidence="8" type="ordered locus">At4g12080</name>
    <name evidence="9" type="ORF">F16J13_150</name>
</gene>
<sequence>MVLNMESTGEAVRSTTGNDGGITVVRSDAPSDFHVAQRSESSNQSPTSVTPPPPQPSSHHTAPPPLQISTVTTTTTTAAMEGISGGLMKKKRGRPRKYGPDGTVVALSPKPISSAPAPSHLPPPSSHVIDFSASEKRSKVKPTNSFNRTKYHHQVENLGEWAPCSVGGNFTPHIITVNTGEDVTMKIISFSQQGPRSICVLSANGVISSVTLRQPDSSGGTLTYEGRFEILSLSGSFMPNDSGGTRSRTGGMSVSLASPDGRVVGGGLAGLLVAASPVQVVVGSFLAGTDHQDQKPKKNKHDFMLSSPTAAIPISSAADHRTIHSVSSLPVNNNTWQTSLASDPRNKHTDINVNVT</sequence>